<feature type="chain" id="PRO_0000075508" description="Insertion element IS986 uncharacterized 8.2 kDa protein">
    <location>
        <begin position="1"/>
        <end position="74"/>
    </location>
</feature>
<accession>P19771</accession>
<name>YIA1_MYCTX</name>
<organism>
    <name type="scientific">Mycobacterium tuberculosis</name>
    <dbReference type="NCBI Taxonomy" id="1773"/>
    <lineage>
        <taxon>Bacteria</taxon>
        <taxon>Bacillati</taxon>
        <taxon>Actinomycetota</taxon>
        <taxon>Actinomycetes</taxon>
        <taxon>Mycobacteriales</taxon>
        <taxon>Mycobacteriaceae</taxon>
        <taxon>Mycobacterium</taxon>
        <taxon>Mycobacterium tuberculosis complex</taxon>
    </lineage>
</organism>
<keyword id="KW-0814">Transposable element</keyword>
<sequence>MSGGSSRRYPPELRERAVRMVAEIRGQHDSEWAAISEIARLLGVAARRRCVSGCARRRSMPAHGPGPRPKNPLR</sequence>
<dbReference type="EMBL" id="X52471">
    <property type="protein sequence ID" value="CAA36708.1"/>
    <property type="molecule type" value="Genomic_DNA"/>
</dbReference>
<dbReference type="SMR" id="P19771"/>
<dbReference type="Gene3D" id="1.10.10.10">
    <property type="entry name" value="Winged helix-like DNA-binding domain superfamily/Winged helix DNA-binding domain"/>
    <property type="match status" value="1"/>
</dbReference>
<dbReference type="InterPro" id="IPR036388">
    <property type="entry name" value="WH-like_DNA-bd_sf"/>
</dbReference>
<reference key="1">
    <citation type="journal article" date="1990" name="Mol. Microbiol.">
        <title>Characterization of a Mycobacterium tuberculosis insertion sequence belonging to the IS3 family.</title>
        <authorList>
            <person name="McAdam R.A."/>
            <person name="Hermans P.W.M."/>
            <person name="van Soolingen D."/>
            <person name="Zainuddin Z.F."/>
            <person name="Catty D."/>
            <person name="van Embden J.D.A."/>
            <person name="Dale J.W."/>
        </authorList>
    </citation>
    <scope>NUCLEOTIDE SEQUENCE [GENOMIC DNA]</scope>
</reference>
<proteinExistence type="predicted"/>
<protein>
    <recommendedName>
        <fullName>Insertion element IS986 uncharacterized 8.2 kDa protein</fullName>
    </recommendedName>
    <alternativeName>
        <fullName>ORFA1</fullName>
    </alternativeName>
</protein>